<proteinExistence type="inferred from homology"/>
<protein>
    <recommendedName>
        <fullName evidence="1">S-adenosylmethionine synthase</fullName>
        <shortName evidence="1">AdoMet synthase</shortName>
        <ecNumber evidence="1">2.5.1.6</ecNumber>
    </recommendedName>
    <alternativeName>
        <fullName evidence="1">Methionine adenosyltransferase</fullName>
    </alternativeName>
</protein>
<keyword id="KW-0067">ATP-binding</keyword>
<keyword id="KW-0460">Magnesium</keyword>
<keyword id="KW-0547">Nucleotide-binding</keyword>
<keyword id="KW-0554">One-carbon metabolism</keyword>
<keyword id="KW-1185">Reference proteome</keyword>
<keyword id="KW-0808">Transferase</keyword>
<dbReference type="EC" id="2.5.1.6" evidence="1"/>
<dbReference type="EMBL" id="AE009441">
    <property type="protein sequence ID" value="AAL62946.1"/>
    <property type="molecule type" value="Genomic_DNA"/>
</dbReference>
<dbReference type="RefSeq" id="WP_011007418.1">
    <property type="nucleotide sequence ID" value="NC_003364.1"/>
</dbReference>
<dbReference type="SMR" id="Q8ZYP7"/>
<dbReference type="FunCoup" id="Q8ZYP7">
    <property type="interactions" value="152"/>
</dbReference>
<dbReference type="STRING" id="178306.PAE0677"/>
<dbReference type="EnsemblBacteria" id="AAL62946">
    <property type="protein sequence ID" value="AAL62946"/>
    <property type="gene ID" value="PAE0677"/>
</dbReference>
<dbReference type="GeneID" id="1465171"/>
<dbReference type="KEGG" id="pai:PAE0677"/>
<dbReference type="PATRIC" id="fig|178306.9.peg.491"/>
<dbReference type="eggNOG" id="arCOG01678">
    <property type="taxonomic scope" value="Archaea"/>
</dbReference>
<dbReference type="HOGENOM" id="CLU_057642_0_0_2"/>
<dbReference type="InParanoid" id="Q8ZYP7"/>
<dbReference type="UniPathway" id="UPA00315">
    <property type="reaction ID" value="UER00080"/>
</dbReference>
<dbReference type="Proteomes" id="UP000002439">
    <property type="component" value="Chromosome"/>
</dbReference>
<dbReference type="GO" id="GO:0005524">
    <property type="term" value="F:ATP binding"/>
    <property type="evidence" value="ECO:0007669"/>
    <property type="project" value="UniProtKB-UniRule"/>
</dbReference>
<dbReference type="GO" id="GO:0000287">
    <property type="term" value="F:magnesium ion binding"/>
    <property type="evidence" value="ECO:0007669"/>
    <property type="project" value="UniProtKB-UniRule"/>
</dbReference>
<dbReference type="GO" id="GO:0004478">
    <property type="term" value="F:methionine adenosyltransferase activity"/>
    <property type="evidence" value="ECO:0007669"/>
    <property type="project" value="UniProtKB-UniRule"/>
</dbReference>
<dbReference type="GO" id="GO:0006730">
    <property type="term" value="P:one-carbon metabolic process"/>
    <property type="evidence" value="ECO:0007669"/>
    <property type="project" value="UniProtKB-KW"/>
</dbReference>
<dbReference type="GO" id="GO:0006556">
    <property type="term" value="P:S-adenosylmethionine biosynthetic process"/>
    <property type="evidence" value="ECO:0007669"/>
    <property type="project" value="UniProtKB-UniRule"/>
</dbReference>
<dbReference type="Gene3D" id="3.30.300.10">
    <property type="match status" value="1"/>
</dbReference>
<dbReference type="Gene3D" id="3.30.300.280">
    <property type="entry name" value="S-adenosylmethionine synthetase, C-terminal domain"/>
    <property type="match status" value="2"/>
</dbReference>
<dbReference type="HAMAP" id="MF_00136">
    <property type="entry name" value="S_AdoMet_synth2"/>
    <property type="match status" value="1"/>
</dbReference>
<dbReference type="InterPro" id="IPR027790">
    <property type="entry name" value="AdoMet_synthase_2_family"/>
</dbReference>
<dbReference type="InterPro" id="IPR042544">
    <property type="entry name" value="AdoMet_synthase_3"/>
</dbReference>
<dbReference type="InterPro" id="IPR002795">
    <property type="entry name" value="S-AdoMet_synthetase_arc"/>
</dbReference>
<dbReference type="NCBIfam" id="NF003365">
    <property type="entry name" value="PRK04439.1-4"/>
    <property type="match status" value="1"/>
</dbReference>
<dbReference type="NCBIfam" id="NF003366">
    <property type="entry name" value="PRK04439.1-5"/>
    <property type="match status" value="1"/>
</dbReference>
<dbReference type="PANTHER" id="PTHR36697">
    <property type="entry name" value="S-ADENOSYLMETHIONINE SYNTHASE"/>
    <property type="match status" value="1"/>
</dbReference>
<dbReference type="PANTHER" id="PTHR36697:SF1">
    <property type="entry name" value="S-ADENOSYLMETHIONINE SYNTHASE"/>
    <property type="match status" value="1"/>
</dbReference>
<dbReference type="Pfam" id="PF01941">
    <property type="entry name" value="AdoMet_Synthase"/>
    <property type="match status" value="1"/>
</dbReference>
<accession>Q8ZYP7</accession>
<sequence>MIVVGKVDKTPVAKRLVEIVERKGQGHPDYIADGVAEWVSKYLSKYYLERFGVILHHNVDKTLVVGGQASPRFGGGEILQPIYILVSGRATYEVRTKEGVVKIPLGPIVMQAARDWIKNHFRYLDPDVHVVIDYRIGQGSADLVGIYDLGVRGIPLANDTSVGVGYAPLTPLEELVYKTERLLNSRDFKAKYPEVGEDVKVMGVRVGKEVKLTIATAMISRLVKDKSHYLSVKDDVKKAVEDLASKIAPEYSVEVTINAADKPEHGIFYLTVTGTSAEHGDDGMTGRGNRANGLITPMRSMSLEAAAGKNPVSHVGKIYNVVAQKIADRIYKEVKDVIEVYVEIVSQIGKPINEPKILNIEIIKDGELTGEVKNEVEAIAKEELGRITQVTDLILRGEVSLY</sequence>
<feature type="chain" id="PRO_0000150036" description="S-adenosylmethionine synthase">
    <location>
        <begin position="1"/>
        <end position="402"/>
    </location>
</feature>
<feature type="binding site" evidence="1">
    <location>
        <begin position="137"/>
        <end position="142"/>
    </location>
    <ligand>
        <name>ATP</name>
        <dbReference type="ChEBI" id="CHEBI:30616"/>
    </ligand>
</feature>
<organism>
    <name type="scientific">Pyrobaculum aerophilum (strain ATCC 51768 / DSM 7523 / JCM 9630 / CIP 104966 / NBRC 100827 / IM2)</name>
    <dbReference type="NCBI Taxonomy" id="178306"/>
    <lineage>
        <taxon>Archaea</taxon>
        <taxon>Thermoproteota</taxon>
        <taxon>Thermoprotei</taxon>
        <taxon>Thermoproteales</taxon>
        <taxon>Thermoproteaceae</taxon>
        <taxon>Pyrobaculum</taxon>
    </lineage>
</organism>
<comment type="function">
    <text evidence="1">Catalyzes the formation of S-adenosylmethionine from methionine and ATP.</text>
</comment>
<comment type="catalytic activity">
    <reaction evidence="1">
        <text>L-methionine + ATP + H2O = S-adenosyl-L-methionine + phosphate + diphosphate</text>
        <dbReference type="Rhea" id="RHEA:21080"/>
        <dbReference type="ChEBI" id="CHEBI:15377"/>
        <dbReference type="ChEBI" id="CHEBI:30616"/>
        <dbReference type="ChEBI" id="CHEBI:33019"/>
        <dbReference type="ChEBI" id="CHEBI:43474"/>
        <dbReference type="ChEBI" id="CHEBI:57844"/>
        <dbReference type="ChEBI" id="CHEBI:59789"/>
        <dbReference type="EC" id="2.5.1.6"/>
    </reaction>
</comment>
<comment type="cofactor">
    <cofactor evidence="1">
        <name>Mg(2+)</name>
        <dbReference type="ChEBI" id="CHEBI:18420"/>
    </cofactor>
</comment>
<comment type="pathway">
    <text evidence="1">Amino-acid biosynthesis; S-adenosyl-L-methionine biosynthesis; S-adenosyl-L-methionine from L-methionine: step 1/1.</text>
</comment>
<comment type="similarity">
    <text evidence="1">Belongs to the AdoMet synthase 2 family.</text>
</comment>
<name>METK_PYRAE</name>
<gene>
    <name evidence="1" type="primary">mat</name>
    <name type="ordered locus">PAE0677</name>
</gene>
<evidence type="ECO:0000255" key="1">
    <source>
        <dbReference type="HAMAP-Rule" id="MF_00136"/>
    </source>
</evidence>
<reference key="1">
    <citation type="journal article" date="2002" name="Proc. Natl. Acad. Sci. U.S.A.">
        <title>Genome sequence of the hyperthermophilic crenarchaeon Pyrobaculum aerophilum.</title>
        <authorList>
            <person name="Fitz-Gibbon S.T."/>
            <person name="Ladner H."/>
            <person name="Kim U.-J."/>
            <person name="Stetter K.O."/>
            <person name="Simon M.I."/>
            <person name="Miller J.H."/>
        </authorList>
    </citation>
    <scope>NUCLEOTIDE SEQUENCE [LARGE SCALE GENOMIC DNA]</scope>
    <source>
        <strain>ATCC 51768 / DSM 7523 / JCM 9630 / CIP 104966 / NBRC 100827 / IM2</strain>
    </source>
</reference>